<proteinExistence type="evidence at transcript level"/>
<comment type="subcellular location">
    <subcellularLocation>
        <location evidence="2">Membrane</location>
        <topology evidence="2">Single-pass membrane protein</topology>
    </subcellularLocation>
</comment>
<comment type="similarity">
    <text evidence="2">Belongs to the shisa family.</text>
</comment>
<gene>
    <name type="primary">Shisal2b</name>
    <name type="synonym">Fam159b</name>
</gene>
<organism>
    <name type="scientific">Mus musculus</name>
    <name type="common">Mouse</name>
    <dbReference type="NCBI Taxonomy" id="10090"/>
    <lineage>
        <taxon>Eukaryota</taxon>
        <taxon>Metazoa</taxon>
        <taxon>Chordata</taxon>
        <taxon>Craniata</taxon>
        <taxon>Vertebrata</taxon>
        <taxon>Euteleostomi</taxon>
        <taxon>Mammalia</taxon>
        <taxon>Eutheria</taxon>
        <taxon>Euarchontoglires</taxon>
        <taxon>Glires</taxon>
        <taxon>Rodentia</taxon>
        <taxon>Myomorpha</taxon>
        <taxon>Muroidea</taxon>
        <taxon>Muridae</taxon>
        <taxon>Murinae</taxon>
        <taxon>Mus</taxon>
        <taxon>Mus</taxon>
    </lineage>
</organism>
<feature type="chain" id="PRO_0000343652" description="Protein shisa-like-2B">
    <location>
        <begin position="1"/>
        <end position="158"/>
    </location>
</feature>
<feature type="transmembrane region" description="Helical" evidence="1">
    <location>
        <begin position="65"/>
        <end position="85"/>
    </location>
</feature>
<name>SHL2B_MOUSE</name>
<evidence type="ECO:0000255" key="1"/>
<evidence type="ECO:0000305" key="2"/>
<keyword id="KW-0472">Membrane</keyword>
<keyword id="KW-1185">Reference proteome</keyword>
<keyword id="KW-0812">Transmembrane</keyword>
<keyword id="KW-1133">Transmembrane helix</keyword>
<sequence length="158" mass="17448">MSQSSRLCSGYYSLNRSFVEPFQCPQRGDGAALLYCCGFADLKYCCSEPGSYFPYKHSYMWSLSIGALVGLGIAALVLLAFVISVCVLCYLFLYTKPQRLDNGLKLQHLETSSTLEGNINRKAKGLNAVSNSTNETFYEADDGTQEKTMDITQINIAC</sequence>
<accession>Q9D1Y9</accession>
<dbReference type="EMBL" id="AK020882">
    <property type="protein sequence ID" value="BAB32240.1"/>
    <property type="molecule type" value="mRNA"/>
</dbReference>
<dbReference type="EMBL" id="AK042897">
    <property type="protein sequence ID" value="BAC31399.1"/>
    <property type="molecule type" value="mRNA"/>
</dbReference>
<dbReference type="CCDS" id="CCDS26754.1"/>
<dbReference type="RefSeq" id="NP_084260.1">
    <property type="nucleotide sequence ID" value="NM_029984.1"/>
</dbReference>
<dbReference type="SMR" id="Q9D1Y9"/>
<dbReference type="STRING" id="10090.ENSMUSP00000042302"/>
<dbReference type="PhosphoSitePlus" id="Q9D1Y9"/>
<dbReference type="PaxDb" id="10090-ENSMUSP00000042302"/>
<dbReference type="ProteomicsDB" id="261032"/>
<dbReference type="Antibodypedia" id="2195">
    <property type="antibodies" value="25 antibodies from 12 providers"/>
</dbReference>
<dbReference type="Ensembl" id="ENSMUST00000043061.5">
    <property type="protein sequence ID" value="ENSMUSP00000042302.5"/>
    <property type="gene ID" value="ENSMUSG00000042655.6"/>
</dbReference>
<dbReference type="GeneID" id="77803"/>
<dbReference type="KEGG" id="mmu:77803"/>
<dbReference type="UCSC" id="uc007rto.1">
    <property type="organism name" value="mouse"/>
</dbReference>
<dbReference type="AGR" id="MGI:1925053"/>
<dbReference type="CTD" id="100132916"/>
<dbReference type="MGI" id="MGI:1925053">
    <property type="gene designation" value="Shisal2b"/>
</dbReference>
<dbReference type="VEuPathDB" id="HostDB:ENSMUSG00000042655"/>
<dbReference type="eggNOG" id="ENOG502S1JE">
    <property type="taxonomic scope" value="Eukaryota"/>
</dbReference>
<dbReference type="GeneTree" id="ENSGT00940000161622"/>
<dbReference type="HOGENOM" id="CLU_140078_0_0_1"/>
<dbReference type="InParanoid" id="Q9D1Y9"/>
<dbReference type="OMA" id="RYCCGFA"/>
<dbReference type="OrthoDB" id="10062839at2759"/>
<dbReference type="PhylomeDB" id="Q9D1Y9"/>
<dbReference type="TreeFam" id="TF335848"/>
<dbReference type="BioGRID-ORCS" id="77803">
    <property type="hits" value="7 hits in 79 CRISPR screens"/>
</dbReference>
<dbReference type="PRO" id="PR:Q9D1Y9"/>
<dbReference type="Proteomes" id="UP000000589">
    <property type="component" value="Chromosome 13"/>
</dbReference>
<dbReference type="RNAct" id="Q9D1Y9">
    <property type="molecule type" value="protein"/>
</dbReference>
<dbReference type="Bgee" id="ENSMUSG00000042655">
    <property type="expression patterns" value="Expressed in embryonic cell in blastocyst and 40 other cell types or tissues"/>
</dbReference>
<dbReference type="GO" id="GO:0016020">
    <property type="term" value="C:membrane"/>
    <property type="evidence" value="ECO:0007669"/>
    <property type="project" value="UniProtKB-SubCell"/>
</dbReference>
<dbReference type="InterPro" id="IPR026910">
    <property type="entry name" value="Shisa"/>
</dbReference>
<dbReference type="InterPro" id="IPR053891">
    <property type="entry name" value="Shisa_N"/>
</dbReference>
<dbReference type="PANTHER" id="PTHR31395:SF2">
    <property type="entry name" value="PROTEIN SHISA-LIKE-2B"/>
    <property type="match status" value="1"/>
</dbReference>
<dbReference type="PANTHER" id="PTHR31395">
    <property type="entry name" value="SHISA"/>
    <property type="match status" value="1"/>
</dbReference>
<dbReference type="Pfam" id="PF13908">
    <property type="entry name" value="Shisa_N"/>
    <property type="match status" value="1"/>
</dbReference>
<reference key="1">
    <citation type="journal article" date="2005" name="Science">
        <title>The transcriptional landscape of the mammalian genome.</title>
        <authorList>
            <person name="Carninci P."/>
            <person name="Kasukawa T."/>
            <person name="Katayama S."/>
            <person name="Gough J."/>
            <person name="Frith M.C."/>
            <person name="Maeda N."/>
            <person name="Oyama R."/>
            <person name="Ravasi T."/>
            <person name="Lenhard B."/>
            <person name="Wells C."/>
            <person name="Kodzius R."/>
            <person name="Shimokawa K."/>
            <person name="Bajic V.B."/>
            <person name="Brenner S.E."/>
            <person name="Batalov S."/>
            <person name="Forrest A.R."/>
            <person name="Zavolan M."/>
            <person name="Davis M.J."/>
            <person name="Wilming L.G."/>
            <person name="Aidinis V."/>
            <person name="Allen J.E."/>
            <person name="Ambesi-Impiombato A."/>
            <person name="Apweiler R."/>
            <person name="Aturaliya R.N."/>
            <person name="Bailey T.L."/>
            <person name="Bansal M."/>
            <person name="Baxter L."/>
            <person name="Beisel K.W."/>
            <person name="Bersano T."/>
            <person name="Bono H."/>
            <person name="Chalk A.M."/>
            <person name="Chiu K.P."/>
            <person name="Choudhary V."/>
            <person name="Christoffels A."/>
            <person name="Clutterbuck D.R."/>
            <person name="Crowe M.L."/>
            <person name="Dalla E."/>
            <person name="Dalrymple B.P."/>
            <person name="de Bono B."/>
            <person name="Della Gatta G."/>
            <person name="di Bernardo D."/>
            <person name="Down T."/>
            <person name="Engstrom P."/>
            <person name="Fagiolini M."/>
            <person name="Faulkner G."/>
            <person name="Fletcher C.F."/>
            <person name="Fukushima T."/>
            <person name="Furuno M."/>
            <person name="Futaki S."/>
            <person name="Gariboldi M."/>
            <person name="Georgii-Hemming P."/>
            <person name="Gingeras T.R."/>
            <person name="Gojobori T."/>
            <person name="Green R.E."/>
            <person name="Gustincich S."/>
            <person name="Harbers M."/>
            <person name="Hayashi Y."/>
            <person name="Hensch T.K."/>
            <person name="Hirokawa N."/>
            <person name="Hill D."/>
            <person name="Huminiecki L."/>
            <person name="Iacono M."/>
            <person name="Ikeo K."/>
            <person name="Iwama A."/>
            <person name="Ishikawa T."/>
            <person name="Jakt M."/>
            <person name="Kanapin A."/>
            <person name="Katoh M."/>
            <person name="Kawasawa Y."/>
            <person name="Kelso J."/>
            <person name="Kitamura H."/>
            <person name="Kitano H."/>
            <person name="Kollias G."/>
            <person name="Krishnan S.P."/>
            <person name="Kruger A."/>
            <person name="Kummerfeld S.K."/>
            <person name="Kurochkin I.V."/>
            <person name="Lareau L.F."/>
            <person name="Lazarevic D."/>
            <person name="Lipovich L."/>
            <person name="Liu J."/>
            <person name="Liuni S."/>
            <person name="McWilliam S."/>
            <person name="Madan Babu M."/>
            <person name="Madera M."/>
            <person name="Marchionni L."/>
            <person name="Matsuda H."/>
            <person name="Matsuzawa S."/>
            <person name="Miki H."/>
            <person name="Mignone F."/>
            <person name="Miyake S."/>
            <person name="Morris K."/>
            <person name="Mottagui-Tabar S."/>
            <person name="Mulder N."/>
            <person name="Nakano N."/>
            <person name="Nakauchi H."/>
            <person name="Ng P."/>
            <person name="Nilsson R."/>
            <person name="Nishiguchi S."/>
            <person name="Nishikawa S."/>
            <person name="Nori F."/>
            <person name="Ohara O."/>
            <person name="Okazaki Y."/>
            <person name="Orlando V."/>
            <person name="Pang K.C."/>
            <person name="Pavan W.J."/>
            <person name="Pavesi G."/>
            <person name="Pesole G."/>
            <person name="Petrovsky N."/>
            <person name="Piazza S."/>
            <person name="Reed J."/>
            <person name="Reid J.F."/>
            <person name="Ring B.Z."/>
            <person name="Ringwald M."/>
            <person name="Rost B."/>
            <person name="Ruan Y."/>
            <person name="Salzberg S.L."/>
            <person name="Sandelin A."/>
            <person name="Schneider C."/>
            <person name="Schoenbach C."/>
            <person name="Sekiguchi K."/>
            <person name="Semple C.A."/>
            <person name="Seno S."/>
            <person name="Sessa L."/>
            <person name="Sheng Y."/>
            <person name="Shibata Y."/>
            <person name="Shimada H."/>
            <person name="Shimada K."/>
            <person name="Silva D."/>
            <person name="Sinclair B."/>
            <person name="Sperling S."/>
            <person name="Stupka E."/>
            <person name="Sugiura K."/>
            <person name="Sultana R."/>
            <person name="Takenaka Y."/>
            <person name="Taki K."/>
            <person name="Tammoja K."/>
            <person name="Tan S.L."/>
            <person name="Tang S."/>
            <person name="Taylor M.S."/>
            <person name="Tegner J."/>
            <person name="Teichmann S.A."/>
            <person name="Ueda H.R."/>
            <person name="van Nimwegen E."/>
            <person name="Verardo R."/>
            <person name="Wei C.L."/>
            <person name="Yagi K."/>
            <person name="Yamanishi H."/>
            <person name="Zabarovsky E."/>
            <person name="Zhu S."/>
            <person name="Zimmer A."/>
            <person name="Hide W."/>
            <person name="Bult C."/>
            <person name="Grimmond S.M."/>
            <person name="Teasdale R.D."/>
            <person name="Liu E.T."/>
            <person name="Brusic V."/>
            <person name="Quackenbush J."/>
            <person name="Wahlestedt C."/>
            <person name="Mattick J.S."/>
            <person name="Hume D.A."/>
            <person name="Kai C."/>
            <person name="Sasaki D."/>
            <person name="Tomaru Y."/>
            <person name="Fukuda S."/>
            <person name="Kanamori-Katayama M."/>
            <person name="Suzuki M."/>
            <person name="Aoki J."/>
            <person name="Arakawa T."/>
            <person name="Iida J."/>
            <person name="Imamura K."/>
            <person name="Itoh M."/>
            <person name="Kato T."/>
            <person name="Kawaji H."/>
            <person name="Kawagashira N."/>
            <person name="Kawashima T."/>
            <person name="Kojima M."/>
            <person name="Kondo S."/>
            <person name="Konno H."/>
            <person name="Nakano K."/>
            <person name="Ninomiya N."/>
            <person name="Nishio T."/>
            <person name="Okada M."/>
            <person name="Plessy C."/>
            <person name="Shibata K."/>
            <person name="Shiraki T."/>
            <person name="Suzuki S."/>
            <person name="Tagami M."/>
            <person name="Waki K."/>
            <person name="Watahiki A."/>
            <person name="Okamura-Oho Y."/>
            <person name="Suzuki H."/>
            <person name="Kawai J."/>
            <person name="Hayashizaki Y."/>
        </authorList>
    </citation>
    <scope>NUCLEOTIDE SEQUENCE [LARGE SCALE MRNA]</scope>
    <source>
        <strain>C57BL/6J</strain>
        <tissue>Cerebellum</tissue>
        <tissue>Retina</tissue>
    </source>
</reference>
<protein>
    <recommendedName>
        <fullName>Protein shisa-like-2B</fullName>
    </recommendedName>
</protein>